<accession>Q9PEX5</accession>
<protein>
    <recommendedName>
        <fullName evidence="1">Endoribonuclease YbeY</fullName>
        <ecNumber evidence="1">3.1.-.-</ecNumber>
    </recommendedName>
</protein>
<keyword id="KW-0963">Cytoplasm</keyword>
<keyword id="KW-0255">Endonuclease</keyword>
<keyword id="KW-0378">Hydrolase</keyword>
<keyword id="KW-0479">Metal-binding</keyword>
<keyword id="KW-0540">Nuclease</keyword>
<keyword id="KW-0690">Ribosome biogenesis</keyword>
<keyword id="KW-0698">rRNA processing</keyword>
<keyword id="KW-0862">Zinc</keyword>
<gene>
    <name evidence="1" type="primary">ybeY</name>
    <name type="ordered locus">XF_0903</name>
</gene>
<name>YBEY_XYLFA</name>
<proteinExistence type="inferred from homology"/>
<evidence type="ECO:0000255" key="1">
    <source>
        <dbReference type="HAMAP-Rule" id="MF_00009"/>
    </source>
</evidence>
<organism>
    <name type="scientific">Xylella fastidiosa (strain 9a5c)</name>
    <dbReference type="NCBI Taxonomy" id="160492"/>
    <lineage>
        <taxon>Bacteria</taxon>
        <taxon>Pseudomonadati</taxon>
        <taxon>Pseudomonadota</taxon>
        <taxon>Gammaproteobacteria</taxon>
        <taxon>Lysobacterales</taxon>
        <taxon>Lysobacteraceae</taxon>
        <taxon>Xylella</taxon>
    </lineage>
</organism>
<sequence>MTRGPIFLNVGISYGLPRTKLPAAVSFRKWVAATLQGRIRKADLAIRIVDEKEGRALNYHYRNKDYATNVLSFPAQLPEPLPKALKIPLLGDIVMCAPVIAREAAEQGKSLSAHYAHLTVHGTLHLLGWNHEDHQEADAMEQLEREILANLGISDPYLEEY</sequence>
<comment type="function">
    <text evidence="1">Single strand-specific metallo-endoribonuclease involved in late-stage 70S ribosome quality control and in maturation of the 3' terminus of the 16S rRNA.</text>
</comment>
<comment type="cofactor">
    <cofactor evidence="1">
        <name>Zn(2+)</name>
        <dbReference type="ChEBI" id="CHEBI:29105"/>
    </cofactor>
    <text evidence="1">Binds 1 zinc ion.</text>
</comment>
<comment type="subcellular location">
    <subcellularLocation>
        <location evidence="1">Cytoplasm</location>
    </subcellularLocation>
</comment>
<comment type="similarity">
    <text evidence="1">Belongs to the endoribonuclease YbeY family.</text>
</comment>
<reference key="1">
    <citation type="journal article" date="2000" name="Nature">
        <title>The genome sequence of the plant pathogen Xylella fastidiosa.</title>
        <authorList>
            <person name="Simpson A.J.G."/>
            <person name="Reinach F.C."/>
            <person name="Arruda P."/>
            <person name="Abreu F.A."/>
            <person name="Acencio M."/>
            <person name="Alvarenga R."/>
            <person name="Alves L.M.C."/>
            <person name="Araya J.E."/>
            <person name="Baia G.S."/>
            <person name="Baptista C.S."/>
            <person name="Barros M.H."/>
            <person name="Bonaccorsi E.D."/>
            <person name="Bordin S."/>
            <person name="Bove J.M."/>
            <person name="Briones M.R.S."/>
            <person name="Bueno M.R.P."/>
            <person name="Camargo A.A."/>
            <person name="Camargo L.E.A."/>
            <person name="Carraro D.M."/>
            <person name="Carrer H."/>
            <person name="Colauto N.B."/>
            <person name="Colombo C."/>
            <person name="Costa F.F."/>
            <person name="Costa M.C.R."/>
            <person name="Costa-Neto C.M."/>
            <person name="Coutinho L.L."/>
            <person name="Cristofani M."/>
            <person name="Dias-Neto E."/>
            <person name="Docena C."/>
            <person name="El-Dorry H."/>
            <person name="Facincani A.P."/>
            <person name="Ferreira A.J.S."/>
            <person name="Ferreira V.C.A."/>
            <person name="Ferro J.A."/>
            <person name="Fraga J.S."/>
            <person name="Franca S.C."/>
            <person name="Franco M.C."/>
            <person name="Frohme M."/>
            <person name="Furlan L.R."/>
            <person name="Garnier M."/>
            <person name="Goldman G.H."/>
            <person name="Goldman M.H.S."/>
            <person name="Gomes S.L."/>
            <person name="Gruber A."/>
            <person name="Ho P.L."/>
            <person name="Hoheisel J.D."/>
            <person name="Junqueira M.L."/>
            <person name="Kemper E.L."/>
            <person name="Kitajima J.P."/>
            <person name="Krieger J.E."/>
            <person name="Kuramae E.E."/>
            <person name="Laigret F."/>
            <person name="Lambais M.R."/>
            <person name="Leite L.C.C."/>
            <person name="Lemos E.G.M."/>
            <person name="Lemos M.V.F."/>
            <person name="Lopes S.A."/>
            <person name="Lopes C.R."/>
            <person name="Machado J.A."/>
            <person name="Machado M.A."/>
            <person name="Madeira A.M.B.N."/>
            <person name="Madeira H.M.F."/>
            <person name="Marino C.L."/>
            <person name="Marques M.V."/>
            <person name="Martins E.A.L."/>
            <person name="Martins E.M.F."/>
            <person name="Matsukuma A.Y."/>
            <person name="Menck C.F.M."/>
            <person name="Miracca E.C."/>
            <person name="Miyaki C.Y."/>
            <person name="Monteiro-Vitorello C.B."/>
            <person name="Moon D.H."/>
            <person name="Nagai M.A."/>
            <person name="Nascimento A.L.T.O."/>
            <person name="Netto L.E.S."/>
            <person name="Nhani A. Jr."/>
            <person name="Nobrega F.G."/>
            <person name="Nunes L.R."/>
            <person name="Oliveira M.A."/>
            <person name="de Oliveira M.C."/>
            <person name="de Oliveira R.C."/>
            <person name="Palmieri D.A."/>
            <person name="Paris A."/>
            <person name="Peixoto B.R."/>
            <person name="Pereira G.A.G."/>
            <person name="Pereira H.A. Jr."/>
            <person name="Pesquero J.B."/>
            <person name="Quaggio R.B."/>
            <person name="Roberto P.G."/>
            <person name="Rodrigues V."/>
            <person name="de Rosa A.J.M."/>
            <person name="de Rosa V.E. Jr."/>
            <person name="de Sa R.G."/>
            <person name="Santelli R.V."/>
            <person name="Sawasaki H.E."/>
            <person name="da Silva A.C.R."/>
            <person name="da Silva A.M."/>
            <person name="da Silva F.R."/>
            <person name="Silva W.A. Jr."/>
            <person name="da Silveira J.F."/>
            <person name="Silvestri M.L.Z."/>
            <person name="Siqueira W.J."/>
            <person name="de Souza A.A."/>
            <person name="de Souza A.P."/>
            <person name="Terenzi M.F."/>
            <person name="Truffi D."/>
            <person name="Tsai S.M."/>
            <person name="Tsuhako M.H."/>
            <person name="Vallada H."/>
            <person name="Van Sluys M.A."/>
            <person name="Verjovski-Almeida S."/>
            <person name="Vettore A.L."/>
            <person name="Zago M.A."/>
            <person name="Zatz M."/>
            <person name="Meidanis J."/>
            <person name="Setubal J.C."/>
        </authorList>
    </citation>
    <scope>NUCLEOTIDE SEQUENCE [LARGE SCALE GENOMIC DNA]</scope>
    <source>
        <strain>9a5c</strain>
    </source>
</reference>
<dbReference type="EC" id="3.1.-.-" evidence="1"/>
<dbReference type="EMBL" id="AE003849">
    <property type="protein sequence ID" value="AAF83713.1"/>
    <property type="molecule type" value="Genomic_DNA"/>
</dbReference>
<dbReference type="PIR" id="C82747">
    <property type="entry name" value="C82747"/>
</dbReference>
<dbReference type="RefSeq" id="WP_010893423.1">
    <property type="nucleotide sequence ID" value="NC_002488.3"/>
</dbReference>
<dbReference type="SMR" id="Q9PEX5"/>
<dbReference type="STRING" id="160492.XF_0903"/>
<dbReference type="KEGG" id="xfa:XF_0903"/>
<dbReference type="eggNOG" id="COG0319">
    <property type="taxonomic scope" value="Bacteria"/>
</dbReference>
<dbReference type="HOGENOM" id="CLU_106710_0_1_6"/>
<dbReference type="Proteomes" id="UP000000812">
    <property type="component" value="Chromosome"/>
</dbReference>
<dbReference type="GO" id="GO:0005737">
    <property type="term" value="C:cytoplasm"/>
    <property type="evidence" value="ECO:0007669"/>
    <property type="project" value="UniProtKB-SubCell"/>
</dbReference>
<dbReference type="GO" id="GO:0004222">
    <property type="term" value="F:metalloendopeptidase activity"/>
    <property type="evidence" value="ECO:0007669"/>
    <property type="project" value="InterPro"/>
</dbReference>
<dbReference type="GO" id="GO:0004521">
    <property type="term" value="F:RNA endonuclease activity"/>
    <property type="evidence" value="ECO:0007669"/>
    <property type="project" value="UniProtKB-UniRule"/>
</dbReference>
<dbReference type="GO" id="GO:0008270">
    <property type="term" value="F:zinc ion binding"/>
    <property type="evidence" value="ECO:0007669"/>
    <property type="project" value="UniProtKB-UniRule"/>
</dbReference>
<dbReference type="GO" id="GO:0006364">
    <property type="term" value="P:rRNA processing"/>
    <property type="evidence" value="ECO:0007669"/>
    <property type="project" value="UniProtKB-UniRule"/>
</dbReference>
<dbReference type="Gene3D" id="3.40.390.30">
    <property type="entry name" value="Metalloproteases ('zincins'), catalytic domain"/>
    <property type="match status" value="1"/>
</dbReference>
<dbReference type="HAMAP" id="MF_00009">
    <property type="entry name" value="Endoribonucl_YbeY"/>
    <property type="match status" value="1"/>
</dbReference>
<dbReference type="InterPro" id="IPR023091">
    <property type="entry name" value="MetalPrtase_cat_dom_sf_prd"/>
</dbReference>
<dbReference type="InterPro" id="IPR002036">
    <property type="entry name" value="YbeY"/>
</dbReference>
<dbReference type="InterPro" id="IPR020549">
    <property type="entry name" value="YbeY_CS"/>
</dbReference>
<dbReference type="NCBIfam" id="TIGR00043">
    <property type="entry name" value="rRNA maturation RNase YbeY"/>
    <property type="match status" value="1"/>
</dbReference>
<dbReference type="PANTHER" id="PTHR46986">
    <property type="entry name" value="ENDORIBONUCLEASE YBEY, CHLOROPLASTIC"/>
    <property type="match status" value="1"/>
</dbReference>
<dbReference type="PANTHER" id="PTHR46986:SF1">
    <property type="entry name" value="ENDORIBONUCLEASE YBEY, CHLOROPLASTIC"/>
    <property type="match status" value="1"/>
</dbReference>
<dbReference type="Pfam" id="PF02130">
    <property type="entry name" value="YbeY"/>
    <property type="match status" value="1"/>
</dbReference>
<dbReference type="SUPFAM" id="SSF55486">
    <property type="entry name" value="Metalloproteases ('zincins'), catalytic domain"/>
    <property type="match status" value="1"/>
</dbReference>
<dbReference type="PROSITE" id="PS01306">
    <property type="entry name" value="UPF0054"/>
    <property type="match status" value="1"/>
</dbReference>
<feature type="chain" id="PRO_0000102573" description="Endoribonuclease YbeY">
    <location>
        <begin position="1"/>
        <end position="161"/>
    </location>
</feature>
<feature type="binding site" evidence="1">
    <location>
        <position position="121"/>
    </location>
    <ligand>
        <name>Zn(2+)</name>
        <dbReference type="ChEBI" id="CHEBI:29105"/>
        <note>catalytic</note>
    </ligand>
</feature>
<feature type="binding site" evidence="1">
    <location>
        <position position="125"/>
    </location>
    <ligand>
        <name>Zn(2+)</name>
        <dbReference type="ChEBI" id="CHEBI:29105"/>
        <note>catalytic</note>
    </ligand>
</feature>
<feature type="binding site" evidence="1">
    <location>
        <position position="131"/>
    </location>
    <ligand>
        <name>Zn(2+)</name>
        <dbReference type="ChEBI" id="CHEBI:29105"/>
        <note>catalytic</note>
    </ligand>
</feature>